<name>C42S2_MOUSE</name>
<sequence length="84" mass="9223">MSEFWLCFNCCIAEQPQPKRRRRIDRSMIGEPTNFVHTAHVGSGDLFSGMNSVSSIQNQMQSKGGYGGGMPANVQMQLVDTKAG</sequence>
<reference key="1">
    <citation type="journal article" date="2005" name="Science">
        <title>The transcriptional landscape of the mammalian genome.</title>
        <authorList>
            <person name="Carninci P."/>
            <person name="Kasukawa T."/>
            <person name="Katayama S."/>
            <person name="Gough J."/>
            <person name="Frith M.C."/>
            <person name="Maeda N."/>
            <person name="Oyama R."/>
            <person name="Ravasi T."/>
            <person name="Lenhard B."/>
            <person name="Wells C."/>
            <person name="Kodzius R."/>
            <person name="Shimokawa K."/>
            <person name="Bajic V.B."/>
            <person name="Brenner S.E."/>
            <person name="Batalov S."/>
            <person name="Forrest A.R."/>
            <person name="Zavolan M."/>
            <person name="Davis M.J."/>
            <person name="Wilming L.G."/>
            <person name="Aidinis V."/>
            <person name="Allen J.E."/>
            <person name="Ambesi-Impiombato A."/>
            <person name="Apweiler R."/>
            <person name="Aturaliya R.N."/>
            <person name="Bailey T.L."/>
            <person name="Bansal M."/>
            <person name="Baxter L."/>
            <person name="Beisel K.W."/>
            <person name="Bersano T."/>
            <person name="Bono H."/>
            <person name="Chalk A.M."/>
            <person name="Chiu K.P."/>
            <person name="Choudhary V."/>
            <person name="Christoffels A."/>
            <person name="Clutterbuck D.R."/>
            <person name="Crowe M.L."/>
            <person name="Dalla E."/>
            <person name="Dalrymple B.P."/>
            <person name="de Bono B."/>
            <person name="Della Gatta G."/>
            <person name="di Bernardo D."/>
            <person name="Down T."/>
            <person name="Engstrom P."/>
            <person name="Fagiolini M."/>
            <person name="Faulkner G."/>
            <person name="Fletcher C.F."/>
            <person name="Fukushima T."/>
            <person name="Furuno M."/>
            <person name="Futaki S."/>
            <person name="Gariboldi M."/>
            <person name="Georgii-Hemming P."/>
            <person name="Gingeras T.R."/>
            <person name="Gojobori T."/>
            <person name="Green R.E."/>
            <person name="Gustincich S."/>
            <person name="Harbers M."/>
            <person name="Hayashi Y."/>
            <person name="Hensch T.K."/>
            <person name="Hirokawa N."/>
            <person name="Hill D."/>
            <person name="Huminiecki L."/>
            <person name="Iacono M."/>
            <person name="Ikeo K."/>
            <person name="Iwama A."/>
            <person name="Ishikawa T."/>
            <person name="Jakt M."/>
            <person name="Kanapin A."/>
            <person name="Katoh M."/>
            <person name="Kawasawa Y."/>
            <person name="Kelso J."/>
            <person name="Kitamura H."/>
            <person name="Kitano H."/>
            <person name="Kollias G."/>
            <person name="Krishnan S.P."/>
            <person name="Kruger A."/>
            <person name="Kummerfeld S.K."/>
            <person name="Kurochkin I.V."/>
            <person name="Lareau L.F."/>
            <person name="Lazarevic D."/>
            <person name="Lipovich L."/>
            <person name="Liu J."/>
            <person name="Liuni S."/>
            <person name="McWilliam S."/>
            <person name="Madan Babu M."/>
            <person name="Madera M."/>
            <person name="Marchionni L."/>
            <person name="Matsuda H."/>
            <person name="Matsuzawa S."/>
            <person name="Miki H."/>
            <person name="Mignone F."/>
            <person name="Miyake S."/>
            <person name="Morris K."/>
            <person name="Mottagui-Tabar S."/>
            <person name="Mulder N."/>
            <person name="Nakano N."/>
            <person name="Nakauchi H."/>
            <person name="Ng P."/>
            <person name="Nilsson R."/>
            <person name="Nishiguchi S."/>
            <person name="Nishikawa S."/>
            <person name="Nori F."/>
            <person name="Ohara O."/>
            <person name="Okazaki Y."/>
            <person name="Orlando V."/>
            <person name="Pang K.C."/>
            <person name="Pavan W.J."/>
            <person name="Pavesi G."/>
            <person name="Pesole G."/>
            <person name="Petrovsky N."/>
            <person name="Piazza S."/>
            <person name="Reed J."/>
            <person name="Reid J.F."/>
            <person name="Ring B.Z."/>
            <person name="Ringwald M."/>
            <person name="Rost B."/>
            <person name="Ruan Y."/>
            <person name="Salzberg S.L."/>
            <person name="Sandelin A."/>
            <person name="Schneider C."/>
            <person name="Schoenbach C."/>
            <person name="Sekiguchi K."/>
            <person name="Semple C.A."/>
            <person name="Seno S."/>
            <person name="Sessa L."/>
            <person name="Sheng Y."/>
            <person name="Shibata Y."/>
            <person name="Shimada H."/>
            <person name="Shimada K."/>
            <person name="Silva D."/>
            <person name="Sinclair B."/>
            <person name="Sperling S."/>
            <person name="Stupka E."/>
            <person name="Sugiura K."/>
            <person name="Sultana R."/>
            <person name="Takenaka Y."/>
            <person name="Taki K."/>
            <person name="Tammoja K."/>
            <person name="Tan S.L."/>
            <person name="Tang S."/>
            <person name="Taylor M.S."/>
            <person name="Tegner J."/>
            <person name="Teichmann S.A."/>
            <person name="Ueda H.R."/>
            <person name="van Nimwegen E."/>
            <person name="Verardo R."/>
            <person name="Wei C.L."/>
            <person name="Yagi K."/>
            <person name="Yamanishi H."/>
            <person name="Zabarovsky E."/>
            <person name="Zhu S."/>
            <person name="Zimmer A."/>
            <person name="Hide W."/>
            <person name="Bult C."/>
            <person name="Grimmond S.M."/>
            <person name="Teasdale R.D."/>
            <person name="Liu E.T."/>
            <person name="Brusic V."/>
            <person name="Quackenbush J."/>
            <person name="Wahlestedt C."/>
            <person name="Mattick J.S."/>
            <person name="Hume D.A."/>
            <person name="Kai C."/>
            <person name="Sasaki D."/>
            <person name="Tomaru Y."/>
            <person name="Fukuda S."/>
            <person name="Kanamori-Katayama M."/>
            <person name="Suzuki M."/>
            <person name="Aoki J."/>
            <person name="Arakawa T."/>
            <person name="Iida J."/>
            <person name="Imamura K."/>
            <person name="Itoh M."/>
            <person name="Kato T."/>
            <person name="Kawaji H."/>
            <person name="Kawagashira N."/>
            <person name="Kawashima T."/>
            <person name="Kojima M."/>
            <person name="Kondo S."/>
            <person name="Konno H."/>
            <person name="Nakano K."/>
            <person name="Ninomiya N."/>
            <person name="Nishio T."/>
            <person name="Okada M."/>
            <person name="Plessy C."/>
            <person name="Shibata K."/>
            <person name="Shiraki T."/>
            <person name="Suzuki S."/>
            <person name="Tagami M."/>
            <person name="Waki K."/>
            <person name="Watahiki A."/>
            <person name="Okamura-Oho Y."/>
            <person name="Suzuki H."/>
            <person name="Kawai J."/>
            <person name="Hayashizaki Y."/>
        </authorList>
    </citation>
    <scope>NUCLEOTIDE SEQUENCE [LARGE SCALE MRNA]</scope>
    <source>
        <strain>C57BL/6J</strain>
        <strain>DBA/2J</strain>
        <strain>NOD</strain>
        <tissue>Cerebellum</tissue>
        <tissue>Egg</tissue>
        <tissue>Lung</tissue>
        <tissue>Placenta</tissue>
        <tissue>Spinal cord</tissue>
        <tissue>Thymus</tissue>
    </source>
</reference>
<reference key="2">
    <citation type="journal article" date="2009" name="PLoS Biol.">
        <title>Lineage-specific biology revealed by a finished genome assembly of the mouse.</title>
        <authorList>
            <person name="Church D.M."/>
            <person name="Goodstadt L."/>
            <person name="Hillier L.W."/>
            <person name="Zody M.C."/>
            <person name="Goldstein S."/>
            <person name="She X."/>
            <person name="Bult C.J."/>
            <person name="Agarwala R."/>
            <person name="Cherry J.L."/>
            <person name="DiCuccio M."/>
            <person name="Hlavina W."/>
            <person name="Kapustin Y."/>
            <person name="Meric P."/>
            <person name="Maglott D."/>
            <person name="Birtle Z."/>
            <person name="Marques A.C."/>
            <person name="Graves T."/>
            <person name="Zhou S."/>
            <person name="Teague B."/>
            <person name="Potamousis K."/>
            <person name="Churas C."/>
            <person name="Place M."/>
            <person name="Herschleb J."/>
            <person name="Runnheim R."/>
            <person name="Forrest D."/>
            <person name="Amos-Landgraf J."/>
            <person name="Schwartz D.C."/>
            <person name="Cheng Z."/>
            <person name="Lindblad-Toh K."/>
            <person name="Eichler E.E."/>
            <person name="Ponting C.P."/>
        </authorList>
    </citation>
    <scope>NUCLEOTIDE SEQUENCE [LARGE SCALE GENOMIC DNA]</scope>
    <source>
        <strain>C57BL/6J</strain>
    </source>
</reference>
<reference key="3">
    <citation type="journal article" date="2004" name="Genome Res.">
        <title>The status, quality, and expansion of the NIH full-length cDNA project: the Mammalian Gene Collection (MGC).</title>
        <authorList>
            <consortium name="The MGC Project Team"/>
        </authorList>
    </citation>
    <scope>NUCLEOTIDE SEQUENCE [LARGE SCALE MRNA]</scope>
    <source>
        <strain>FVB/N</strain>
        <tissue>Colon</tissue>
    </source>
</reference>
<reference key="4">
    <citation type="journal article" date="2005" name="J. Biol. Chem.">
        <title>The role of SPECs, small Cdc42-binding proteins, in F-actin accumulation at the immunological synapse.</title>
        <authorList>
            <person name="Ching K.H."/>
            <person name="Kisailus A.E."/>
            <person name="Burbelo P.D."/>
        </authorList>
    </citation>
    <scope>TISSUE SPECIFICITY</scope>
</reference>
<reference key="5">
    <citation type="journal article" date="2010" name="Cell">
        <title>A tissue-specific atlas of mouse protein phosphorylation and expression.</title>
        <authorList>
            <person name="Huttlin E.L."/>
            <person name="Jedrychowski M.P."/>
            <person name="Elias J.E."/>
            <person name="Goswami T."/>
            <person name="Rad R."/>
            <person name="Beausoleil S.A."/>
            <person name="Villen J."/>
            <person name="Haas W."/>
            <person name="Sowa M.E."/>
            <person name="Gygi S.P."/>
        </authorList>
    </citation>
    <scope>PHOSPHORYLATION [LARGE SCALE ANALYSIS] AT SER-43 AND SER-52</scope>
    <scope>IDENTIFICATION BY MASS SPECTROMETRY [LARGE SCALE ANALYSIS]</scope>
    <source>
        <tissue>Brain</tissue>
        <tissue>Lung</tissue>
        <tissue>Spleen</tissue>
    </source>
</reference>
<protein>
    <recommendedName>
        <fullName>CDC42 small effector protein 2</fullName>
    </recommendedName>
</protein>
<gene>
    <name type="primary">Cdc42se2</name>
</gene>
<proteinExistence type="evidence at protein level"/>
<evidence type="ECO:0000250" key="1"/>
<evidence type="ECO:0000255" key="2">
    <source>
        <dbReference type="PROSITE-ProRule" id="PRU00057"/>
    </source>
</evidence>
<evidence type="ECO:0000269" key="3">
    <source>
    </source>
</evidence>
<evidence type="ECO:0000305" key="4"/>
<evidence type="ECO:0007744" key="5">
    <source>
    </source>
</evidence>
<organism>
    <name type="scientific">Mus musculus</name>
    <name type="common">Mouse</name>
    <dbReference type="NCBI Taxonomy" id="10090"/>
    <lineage>
        <taxon>Eukaryota</taxon>
        <taxon>Metazoa</taxon>
        <taxon>Chordata</taxon>
        <taxon>Craniata</taxon>
        <taxon>Vertebrata</taxon>
        <taxon>Euteleostomi</taxon>
        <taxon>Mammalia</taxon>
        <taxon>Eutheria</taxon>
        <taxon>Euarchontoglires</taxon>
        <taxon>Glires</taxon>
        <taxon>Rodentia</taxon>
        <taxon>Myomorpha</taxon>
        <taxon>Muroidea</taxon>
        <taxon>Muridae</taxon>
        <taxon>Murinae</taxon>
        <taxon>Mus</taxon>
        <taxon>Mus</taxon>
    </lineage>
</organism>
<feature type="chain" id="PRO_0000334640" description="CDC42 small effector protein 2">
    <location>
        <begin position="1"/>
        <end position="84"/>
    </location>
</feature>
<feature type="domain" description="CRIB" evidence="2">
    <location>
        <begin position="29"/>
        <end position="42"/>
    </location>
</feature>
<feature type="modified residue" description="Phosphoserine" evidence="5">
    <location>
        <position position="43"/>
    </location>
</feature>
<feature type="modified residue" description="Phosphoserine" evidence="5">
    <location>
        <position position="52"/>
    </location>
</feature>
<feature type="lipid moiety-binding region" description="S-palmitoyl cysteine" evidence="1">
    <location>
        <position position="10"/>
    </location>
</feature>
<feature type="lipid moiety-binding region" description="S-palmitoyl cysteine" evidence="1">
    <location>
        <position position="11"/>
    </location>
</feature>
<feature type="sequence conflict" description="In Ref. 1; BAE26762." evidence="4" ref="1">
    <original>M</original>
    <variation>T</variation>
    <location>
        <position position="76"/>
    </location>
</feature>
<keyword id="KW-1003">Cell membrane</keyword>
<keyword id="KW-0966">Cell projection</keyword>
<keyword id="KW-0133">Cell shape</keyword>
<keyword id="KW-0963">Cytoplasm</keyword>
<keyword id="KW-0206">Cytoskeleton</keyword>
<keyword id="KW-0449">Lipoprotein</keyword>
<keyword id="KW-0472">Membrane</keyword>
<keyword id="KW-0564">Palmitate</keyword>
<keyword id="KW-0581">Phagocytosis</keyword>
<keyword id="KW-0597">Phosphoprotein</keyword>
<keyword id="KW-1185">Reference proteome</keyword>
<accession>Q8BGH7</accession>
<accession>Q3UKN9</accession>
<comment type="function">
    <text evidence="1">Probably involved in the organization of the actin cytoskeleton by acting downstream of CDC42, inducing actin filament assembly. Alters CDC42-induced cell shape changes. In activated T-cells, may play a role in CDC42-mediated F-actin accumulation at the immunological synapse. May play a role in early contractile events in phagocytosis in macrophages (By similarity).</text>
</comment>
<comment type="subunit">
    <text evidence="1">Interacts with CDC42 (in GTP-bound form). Interacts weakly with RAC1 and not at all with RHOA (By similarity).</text>
</comment>
<comment type="subcellular location">
    <subcellularLocation>
        <location evidence="1">Cytoplasm</location>
        <location evidence="1">Cytoskeleton</location>
    </subcellularLocation>
    <subcellularLocation>
        <location evidence="1">Cell membrane</location>
        <topology evidence="1">Lipid-anchor</topology>
    </subcellularLocation>
    <subcellularLocation>
        <location evidence="1">Cell projection</location>
        <location evidence="1">Phagocytic cup</location>
    </subcellularLocation>
    <text evidence="1">Recruited to the activated TCR prior actin polymerization. Localizes at the phagocytic cup of macrophages.</text>
</comment>
<comment type="tissue specificity">
    <text evidence="3">Detected in spleen, thymus and lung (at protein level).</text>
</comment>
<comment type="domain">
    <text evidence="1">The CRIB domain mediates interaction with CDC42.</text>
</comment>
<comment type="similarity">
    <text evidence="4">Belongs to the CDC42SE/SPEC family.</text>
</comment>
<dbReference type="EMBL" id="AK039301">
    <property type="protein sequence ID" value="BAC30311.1"/>
    <property type="molecule type" value="mRNA"/>
</dbReference>
<dbReference type="EMBL" id="AK080473">
    <property type="protein sequence ID" value="BAC37927.1"/>
    <property type="molecule type" value="mRNA"/>
</dbReference>
<dbReference type="EMBL" id="AK088090">
    <property type="protein sequence ID" value="BAC40139.1"/>
    <property type="molecule type" value="mRNA"/>
</dbReference>
<dbReference type="EMBL" id="AK090381">
    <property type="protein sequence ID" value="BAC41193.1"/>
    <property type="molecule type" value="mRNA"/>
</dbReference>
<dbReference type="EMBL" id="AK135775">
    <property type="protein sequence ID" value="BAE22655.1"/>
    <property type="molecule type" value="mRNA"/>
</dbReference>
<dbReference type="EMBL" id="AK145931">
    <property type="protein sequence ID" value="BAE26762.1"/>
    <property type="molecule type" value="mRNA"/>
</dbReference>
<dbReference type="EMBL" id="AK146313">
    <property type="protein sequence ID" value="BAE27068.1"/>
    <property type="molecule type" value="mRNA"/>
</dbReference>
<dbReference type="EMBL" id="AK160934">
    <property type="protein sequence ID" value="BAE36099.1"/>
    <property type="molecule type" value="mRNA"/>
</dbReference>
<dbReference type="EMBL" id="AL607091">
    <property type="status" value="NOT_ANNOTATED_CDS"/>
    <property type="molecule type" value="Genomic_DNA"/>
</dbReference>
<dbReference type="EMBL" id="AL954817">
    <property type="status" value="NOT_ANNOTATED_CDS"/>
    <property type="molecule type" value="Genomic_DNA"/>
</dbReference>
<dbReference type="EMBL" id="BC048935">
    <property type="protein sequence ID" value="AAH48935.1"/>
    <property type="molecule type" value="mRNA"/>
</dbReference>
<dbReference type="CCDS" id="CCDS36153.1"/>
<dbReference type="RefSeq" id="NP_848741.1">
    <property type="nucleotide sequence ID" value="NM_178626.3"/>
</dbReference>
<dbReference type="RefSeq" id="XP_006534383.1">
    <property type="nucleotide sequence ID" value="XM_006534320.4"/>
</dbReference>
<dbReference type="RefSeq" id="XP_030102229.1">
    <property type="nucleotide sequence ID" value="XM_030246369.2"/>
</dbReference>
<dbReference type="RefSeq" id="XP_030102230.1">
    <property type="nucleotide sequence ID" value="XM_030246370.1"/>
</dbReference>
<dbReference type="BioGRID" id="215537">
    <property type="interactions" value="1"/>
</dbReference>
<dbReference type="FunCoup" id="Q8BGH7">
    <property type="interactions" value="1461"/>
</dbReference>
<dbReference type="STRING" id="10090.ENSMUSP00000070725"/>
<dbReference type="GlyGen" id="Q8BGH7">
    <property type="glycosylation" value="2 sites, 1 O-linked glycan (2 sites)"/>
</dbReference>
<dbReference type="iPTMnet" id="Q8BGH7"/>
<dbReference type="PhosphoSitePlus" id="Q8BGH7"/>
<dbReference type="SwissPalm" id="Q8BGH7"/>
<dbReference type="PaxDb" id="10090-ENSMUSP00000070725"/>
<dbReference type="PeptideAtlas" id="Q8BGH7"/>
<dbReference type="ProteomicsDB" id="281717"/>
<dbReference type="Pumba" id="Q8BGH7"/>
<dbReference type="Antibodypedia" id="25863">
    <property type="antibodies" value="102 antibodies from 14 providers"/>
</dbReference>
<dbReference type="DNASU" id="72729"/>
<dbReference type="Ensembl" id="ENSMUST00000064104.13">
    <property type="protein sequence ID" value="ENSMUSP00000070725.7"/>
    <property type="gene ID" value="ENSMUSG00000052298.13"/>
</dbReference>
<dbReference type="GeneID" id="72729"/>
<dbReference type="KEGG" id="mmu:72729"/>
<dbReference type="UCSC" id="uc007iyf.2">
    <property type="organism name" value="mouse"/>
</dbReference>
<dbReference type="AGR" id="MGI:1919979"/>
<dbReference type="CTD" id="56990"/>
<dbReference type="MGI" id="MGI:1919979">
    <property type="gene designation" value="Cdc42se2"/>
</dbReference>
<dbReference type="VEuPathDB" id="HostDB:ENSMUSG00000052298"/>
<dbReference type="eggNOG" id="ENOG502S22R">
    <property type="taxonomic scope" value="Eukaryota"/>
</dbReference>
<dbReference type="GeneTree" id="ENSGT00940000158245"/>
<dbReference type="HOGENOM" id="CLU_173417_1_0_1"/>
<dbReference type="InParanoid" id="Q8BGH7"/>
<dbReference type="OMA" id="CCIGGQP"/>
<dbReference type="OrthoDB" id="5559822at2759"/>
<dbReference type="PhylomeDB" id="Q8BGH7"/>
<dbReference type="TreeFam" id="TF323815"/>
<dbReference type="BioGRID-ORCS" id="72729">
    <property type="hits" value="4 hits in 78 CRISPR screens"/>
</dbReference>
<dbReference type="ChiTaRS" id="Cdc42se2">
    <property type="organism name" value="mouse"/>
</dbReference>
<dbReference type="PRO" id="PR:Q8BGH7"/>
<dbReference type="Proteomes" id="UP000000589">
    <property type="component" value="Chromosome 11"/>
</dbReference>
<dbReference type="RNAct" id="Q8BGH7">
    <property type="molecule type" value="protein"/>
</dbReference>
<dbReference type="Bgee" id="ENSMUSG00000052298">
    <property type="expression patterns" value="Expressed in animal zygote and 273 other cell types or tissues"/>
</dbReference>
<dbReference type="ExpressionAtlas" id="Q8BGH7">
    <property type="expression patterns" value="baseline and differential"/>
</dbReference>
<dbReference type="GO" id="GO:0042995">
    <property type="term" value="C:cell projection"/>
    <property type="evidence" value="ECO:0007669"/>
    <property type="project" value="UniProtKB-KW"/>
</dbReference>
<dbReference type="GO" id="GO:0005737">
    <property type="term" value="C:cytoplasm"/>
    <property type="evidence" value="ECO:0007669"/>
    <property type="project" value="UniProtKB-KW"/>
</dbReference>
<dbReference type="GO" id="GO:0005856">
    <property type="term" value="C:cytoskeleton"/>
    <property type="evidence" value="ECO:0007669"/>
    <property type="project" value="UniProtKB-SubCell"/>
</dbReference>
<dbReference type="GO" id="GO:0001891">
    <property type="term" value="C:phagocytic cup"/>
    <property type="evidence" value="ECO:0007669"/>
    <property type="project" value="UniProtKB-SubCell"/>
</dbReference>
<dbReference type="GO" id="GO:0005886">
    <property type="term" value="C:plasma membrane"/>
    <property type="evidence" value="ECO:0000250"/>
    <property type="project" value="UniProtKB"/>
</dbReference>
<dbReference type="GO" id="GO:0035591">
    <property type="term" value="F:signaling adaptor activity"/>
    <property type="evidence" value="ECO:0007669"/>
    <property type="project" value="Ensembl"/>
</dbReference>
<dbReference type="GO" id="GO:0031267">
    <property type="term" value="F:small GTPase binding"/>
    <property type="evidence" value="ECO:0007669"/>
    <property type="project" value="InterPro"/>
</dbReference>
<dbReference type="GO" id="GO:0006909">
    <property type="term" value="P:phagocytosis"/>
    <property type="evidence" value="ECO:0007669"/>
    <property type="project" value="UniProtKB-KW"/>
</dbReference>
<dbReference type="GO" id="GO:0008360">
    <property type="term" value="P:regulation of cell shape"/>
    <property type="evidence" value="ECO:0007669"/>
    <property type="project" value="UniProtKB-KW"/>
</dbReference>
<dbReference type="GO" id="GO:0035023">
    <property type="term" value="P:regulation of Rho protein signal transduction"/>
    <property type="evidence" value="ECO:0007669"/>
    <property type="project" value="InterPro"/>
</dbReference>
<dbReference type="GO" id="GO:0009966">
    <property type="term" value="P:regulation of signal transduction"/>
    <property type="evidence" value="ECO:0000250"/>
    <property type="project" value="UniProtKB"/>
</dbReference>
<dbReference type="CDD" id="cd00132">
    <property type="entry name" value="CRIB"/>
    <property type="match status" value="1"/>
</dbReference>
<dbReference type="FunFam" id="3.90.810.10:FF:000004">
    <property type="entry name" value="CDC42 small effector protein 2"/>
    <property type="match status" value="1"/>
</dbReference>
<dbReference type="Gene3D" id="3.90.810.10">
    <property type="entry name" value="CRIB domain"/>
    <property type="match status" value="1"/>
</dbReference>
<dbReference type="InterPro" id="IPR000095">
    <property type="entry name" value="CRIB_dom"/>
</dbReference>
<dbReference type="InterPro" id="IPR036936">
    <property type="entry name" value="CRIB_dom_sf"/>
</dbReference>
<dbReference type="InterPro" id="IPR039056">
    <property type="entry name" value="SPEC"/>
</dbReference>
<dbReference type="PANTHER" id="PTHR13502:SF4">
    <property type="entry name" value="CDC42 SMALL EFFECTOR PROTEIN 2"/>
    <property type="match status" value="1"/>
</dbReference>
<dbReference type="PANTHER" id="PTHR13502">
    <property type="entry name" value="CDC42 SMALL EFFECTOR PROTEIN HOMOLOG"/>
    <property type="match status" value="1"/>
</dbReference>
<dbReference type="Pfam" id="PF00786">
    <property type="entry name" value="PBD"/>
    <property type="match status" value="1"/>
</dbReference>
<dbReference type="PROSITE" id="PS50108">
    <property type="entry name" value="CRIB"/>
    <property type="match status" value="1"/>
</dbReference>